<proteinExistence type="evidence at transcript level"/>
<protein>
    <recommendedName>
        <fullName evidence="3">Vexin</fullName>
    </recommendedName>
</protein>
<evidence type="ECO:0000256" key="1">
    <source>
        <dbReference type="SAM" id="MobiDB-lite"/>
    </source>
</evidence>
<evidence type="ECO:0000269" key="2">
    <source>
    </source>
</evidence>
<evidence type="ECO:0000303" key="3">
    <source>
    </source>
</evidence>
<evidence type="ECO:0000305" key="4"/>
<name>VEXIN_MOUSE</name>
<accession>Q8BG31</accession>
<keyword id="KW-1003">Cell membrane</keyword>
<keyword id="KW-0472">Membrane</keyword>
<keyword id="KW-0524">Neurogenesis</keyword>
<keyword id="KW-0539">Nucleus</keyword>
<keyword id="KW-1185">Reference proteome</keyword>
<gene>
    <name evidence="3" type="primary">Vxn</name>
</gene>
<feature type="chain" id="PRO_0000271015" description="Vexin">
    <location>
        <begin position="1"/>
        <end position="207"/>
    </location>
</feature>
<feature type="region of interest" description="Disordered" evidence="1">
    <location>
        <begin position="65"/>
        <end position="104"/>
    </location>
</feature>
<reference key="1">
    <citation type="journal article" date="2005" name="Science">
        <title>The transcriptional landscape of the mammalian genome.</title>
        <authorList>
            <person name="Carninci P."/>
            <person name="Kasukawa T."/>
            <person name="Katayama S."/>
            <person name="Gough J."/>
            <person name="Frith M.C."/>
            <person name="Maeda N."/>
            <person name="Oyama R."/>
            <person name="Ravasi T."/>
            <person name="Lenhard B."/>
            <person name="Wells C."/>
            <person name="Kodzius R."/>
            <person name="Shimokawa K."/>
            <person name="Bajic V.B."/>
            <person name="Brenner S.E."/>
            <person name="Batalov S."/>
            <person name="Forrest A.R."/>
            <person name="Zavolan M."/>
            <person name="Davis M.J."/>
            <person name="Wilming L.G."/>
            <person name="Aidinis V."/>
            <person name="Allen J.E."/>
            <person name="Ambesi-Impiombato A."/>
            <person name="Apweiler R."/>
            <person name="Aturaliya R.N."/>
            <person name="Bailey T.L."/>
            <person name="Bansal M."/>
            <person name="Baxter L."/>
            <person name="Beisel K.W."/>
            <person name="Bersano T."/>
            <person name="Bono H."/>
            <person name="Chalk A.M."/>
            <person name="Chiu K.P."/>
            <person name="Choudhary V."/>
            <person name="Christoffels A."/>
            <person name="Clutterbuck D.R."/>
            <person name="Crowe M.L."/>
            <person name="Dalla E."/>
            <person name="Dalrymple B.P."/>
            <person name="de Bono B."/>
            <person name="Della Gatta G."/>
            <person name="di Bernardo D."/>
            <person name="Down T."/>
            <person name="Engstrom P."/>
            <person name="Fagiolini M."/>
            <person name="Faulkner G."/>
            <person name="Fletcher C.F."/>
            <person name="Fukushima T."/>
            <person name="Furuno M."/>
            <person name="Futaki S."/>
            <person name="Gariboldi M."/>
            <person name="Georgii-Hemming P."/>
            <person name="Gingeras T.R."/>
            <person name="Gojobori T."/>
            <person name="Green R.E."/>
            <person name="Gustincich S."/>
            <person name="Harbers M."/>
            <person name="Hayashi Y."/>
            <person name="Hensch T.K."/>
            <person name="Hirokawa N."/>
            <person name="Hill D."/>
            <person name="Huminiecki L."/>
            <person name="Iacono M."/>
            <person name="Ikeo K."/>
            <person name="Iwama A."/>
            <person name="Ishikawa T."/>
            <person name="Jakt M."/>
            <person name="Kanapin A."/>
            <person name="Katoh M."/>
            <person name="Kawasawa Y."/>
            <person name="Kelso J."/>
            <person name="Kitamura H."/>
            <person name="Kitano H."/>
            <person name="Kollias G."/>
            <person name="Krishnan S.P."/>
            <person name="Kruger A."/>
            <person name="Kummerfeld S.K."/>
            <person name="Kurochkin I.V."/>
            <person name="Lareau L.F."/>
            <person name="Lazarevic D."/>
            <person name="Lipovich L."/>
            <person name="Liu J."/>
            <person name="Liuni S."/>
            <person name="McWilliam S."/>
            <person name="Madan Babu M."/>
            <person name="Madera M."/>
            <person name="Marchionni L."/>
            <person name="Matsuda H."/>
            <person name="Matsuzawa S."/>
            <person name="Miki H."/>
            <person name="Mignone F."/>
            <person name="Miyake S."/>
            <person name="Morris K."/>
            <person name="Mottagui-Tabar S."/>
            <person name="Mulder N."/>
            <person name="Nakano N."/>
            <person name="Nakauchi H."/>
            <person name="Ng P."/>
            <person name="Nilsson R."/>
            <person name="Nishiguchi S."/>
            <person name="Nishikawa S."/>
            <person name="Nori F."/>
            <person name="Ohara O."/>
            <person name="Okazaki Y."/>
            <person name="Orlando V."/>
            <person name="Pang K.C."/>
            <person name="Pavan W.J."/>
            <person name="Pavesi G."/>
            <person name="Pesole G."/>
            <person name="Petrovsky N."/>
            <person name="Piazza S."/>
            <person name="Reed J."/>
            <person name="Reid J.F."/>
            <person name="Ring B.Z."/>
            <person name="Ringwald M."/>
            <person name="Rost B."/>
            <person name="Ruan Y."/>
            <person name="Salzberg S.L."/>
            <person name="Sandelin A."/>
            <person name="Schneider C."/>
            <person name="Schoenbach C."/>
            <person name="Sekiguchi K."/>
            <person name="Semple C.A."/>
            <person name="Seno S."/>
            <person name="Sessa L."/>
            <person name="Sheng Y."/>
            <person name="Shibata Y."/>
            <person name="Shimada H."/>
            <person name="Shimada K."/>
            <person name="Silva D."/>
            <person name="Sinclair B."/>
            <person name="Sperling S."/>
            <person name="Stupka E."/>
            <person name="Sugiura K."/>
            <person name="Sultana R."/>
            <person name="Takenaka Y."/>
            <person name="Taki K."/>
            <person name="Tammoja K."/>
            <person name="Tan S.L."/>
            <person name="Tang S."/>
            <person name="Taylor M.S."/>
            <person name="Tegner J."/>
            <person name="Teichmann S.A."/>
            <person name="Ueda H.R."/>
            <person name="van Nimwegen E."/>
            <person name="Verardo R."/>
            <person name="Wei C.L."/>
            <person name="Yagi K."/>
            <person name="Yamanishi H."/>
            <person name="Zabarovsky E."/>
            <person name="Zhu S."/>
            <person name="Zimmer A."/>
            <person name="Hide W."/>
            <person name="Bult C."/>
            <person name="Grimmond S.M."/>
            <person name="Teasdale R.D."/>
            <person name="Liu E.T."/>
            <person name="Brusic V."/>
            <person name="Quackenbush J."/>
            <person name="Wahlestedt C."/>
            <person name="Mattick J.S."/>
            <person name="Hume D.A."/>
            <person name="Kai C."/>
            <person name="Sasaki D."/>
            <person name="Tomaru Y."/>
            <person name="Fukuda S."/>
            <person name="Kanamori-Katayama M."/>
            <person name="Suzuki M."/>
            <person name="Aoki J."/>
            <person name="Arakawa T."/>
            <person name="Iida J."/>
            <person name="Imamura K."/>
            <person name="Itoh M."/>
            <person name="Kato T."/>
            <person name="Kawaji H."/>
            <person name="Kawagashira N."/>
            <person name="Kawashima T."/>
            <person name="Kojima M."/>
            <person name="Kondo S."/>
            <person name="Konno H."/>
            <person name="Nakano K."/>
            <person name="Ninomiya N."/>
            <person name="Nishio T."/>
            <person name="Okada M."/>
            <person name="Plessy C."/>
            <person name="Shibata K."/>
            <person name="Shiraki T."/>
            <person name="Suzuki S."/>
            <person name="Tagami M."/>
            <person name="Waki K."/>
            <person name="Watahiki A."/>
            <person name="Okamura-Oho Y."/>
            <person name="Suzuki H."/>
            <person name="Kawai J."/>
            <person name="Hayashizaki Y."/>
        </authorList>
    </citation>
    <scope>NUCLEOTIDE SEQUENCE [LARGE SCALE MRNA]</scope>
    <source>
        <strain>C57BL/6J</strain>
        <tissue>Brain cortex</tissue>
    </source>
</reference>
<reference key="2">
    <citation type="journal article" date="2004" name="Genome Res.">
        <title>The status, quality, and expansion of the NIH full-length cDNA project: the Mammalian Gene Collection (MGC).</title>
        <authorList>
            <consortium name="The MGC Project Team"/>
        </authorList>
    </citation>
    <scope>NUCLEOTIDE SEQUENCE [LARGE SCALE MRNA]</scope>
    <source>
        <strain>C57BL/6J</strain>
        <tissue>Brain</tissue>
    </source>
</reference>
<reference key="3">
    <citation type="journal article" date="2018" name="Dev. Biol.">
        <title>C8orf46 homolog encodes a novel protein Vexin that is required for neurogenesis in Xenopus laevis.</title>
        <authorList>
            <person name="Moore K.B."/>
            <person name="Logan M.A."/>
            <person name="Aldiri I."/>
            <person name="Roberts J.M."/>
            <person name="Steele M."/>
            <person name="Vetter M.L."/>
        </authorList>
    </citation>
    <scope>FUNCTION</scope>
    <scope>SUBCELLULAR LOCATION</scope>
</reference>
<dbReference type="EMBL" id="AK043576">
    <property type="protein sequence ID" value="BAC31586.1"/>
    <property type="molecule type" value="mRNA"/>
</dbReference>
<dbReference type="EMBL" id="AK043759">
    <property type="protein sequence ID" value="BAC31645.1"/>
    <property type="molecule type" value="mRNA"/>
</dbReference>
<dbReference type="EMBL" id="BC066997">
    <property type="protein sequence ID" value="AAH66997.1"/>
    <property type="molecule type" value="mRNA"/>
</dbReference>
<dbReference type="CCDS" id="CCDS14813.1"/>
<dbReference type="RefSeq" id="NP_848486.1">
    <property type="nucleotide sequence ID" value="NM_178399.4"/>
</dbReference>
<dbReference type="FunCoup" id="Q8BG31">
    <property type="interactions" value="484"/>
</dbReference>
<dbReference type="STRING" id="10090.ENSMUSP00000086041"/>
<dbReference type="PhosphoSitePlus" id="Q8BG31"/>
<dbReference type="PaxDb" id="10090-ENSMUSP00000086041"/>
<dbReference type="Antibodypedia" id="65917">
    <property type="antibodies" value="13 antibodies from 8 providers"/>
</dbReference>
<dbReference type="Ensembl" id="ENSMUST00000088666.4">
    <property type="protein sequence ID" value="ENSMUSP00000086041.4"/>
    <property type="gene ID" value="ENSMUSG00000067879.4"/>
</dbReference>
<dbReference type="GeneID" id="76982"/>
<dbReference type="KEGG" id="mmu:76982"/>
<dbReference type="UCSC" id="uc007agp.1">
    <property type="organism name" value="mouse"/>
</dbReference>
<dbReference type="AGR" id="MGI:1924232"/>
<dbReference type="CTD" id="254778"/>
<dbReference type="MGI" id="MGI:1924232">
    <property type="gene designation" value="Vxn"/>
</dbReference>
<dbReference type="VEuPathDB" id="HostDB:ENSMUSG00000067879"/>
<dbReference type="eggNOG" id="ENOG502S3CJ">
    <property type="taxonomic scope" value="Eukaryota"/>
</dbReference>
<dbReference type="GeneTree" id="ENSGT00390000010499"/>
<dbReference type="HOGENOM" id="CLU_116780_0_0_1"/>
<dbReference type="InParanoid" id="Q8BG31"/>
<dbReference type="OMA" id="DRWDTGD"/>
<dbReference type="OrthoDB" id="5340910at2759"/>
<dbReference type="PhylomeDB" id="Q8BG31"/>
<dbReference type="TreeFam" id="TF336189"/>
<dbReference type="BioGRID-ORCS" id="76982">
    <property type="hits" value="5 hits in 74 CRISPR screens"/>
</dbReference>
<dbReference type="ChiTaRS" id="Vxn">
    <property type="organism name" value="mouse"/>
</dbReference>
<dbReference type="PRO" id="PR:Q8BG31"/>
<dbReference type="Proteomes" id="UP000000589">
    <property type="component" value="Chromosome 1"/>
</dbReference>
<dbReference type="RNAct" id="Q8BG31">
    <property type="molecule type" value="protein"/>
</dbReference>
<dbReference type="Bgee" id="ENSMUSG00000067879">
    <property type="expression patterns" value="Expressed in primary motor cortex and 78 other cell types or tissues"/>
</dbReference>
<dbReference type="GO" id="GO:0005634">
    <property type="term" value="C:nucleus"/>
    <property type="evidence" value="ECO:0000314"/>
    <property type="project" value="UniProtKB"/>
</dbReference>
<dbReference type="GO" id="GO:0005886">
    <property type="term" value="C:plasma membrane"/>
    <property type="evidence" value="ECO:0000314"/>
    <property type="project" value="UniProtKB"/>
</dbReference>
<dbReference type="GO" id="GO:0022008">
    <property type="term" value="P:neurogenesis"/>
    <property type="evidence" value="ECO:0000315"/>
    <property type="project" value="UniProtKB"/>
</dbReference>
<dbReference type="GO" id="GO:0030182">
    <property type="term" value="P:neuron differentiation"/>
    <property type="evidence" value="ECO:0000315"/>
    <property type="project" value="UniProtKB"/>
</dbReference>
<dbReference type="InterPro" id="IPR040470">
    <property type="entry name" value="Vexin"/>
</dbReference>
<dbReference type="InterPro" id="IPR027900">
    <property type="entry name" value="Vexin_dom"/>
</dbReference>
<dbReference type="PANTHER" id="PTHR31520">
    <property type="entry name" value="VEXIN"/>
    <property type="match status" value="1"/>
</dbReference>
<dbReference type="PANTHER" id="PTHR31520:SF1">
    <property type="entry name" value="VEXIN"/>
    <property type="match status" value="1"/>
</dbReference>
<dbReference type="Pfam" id="PF15505">
    <property type="entry name" value="Vexin"/>
    <property type="match status" value="1"/>
</dbReference>
<organism>
    <name type="scientific">Mus musculus</name>
    <name type="common">Mouse</name>
    <dbReference type="NCBI Taxonomy" id="10090"/>
    <lineage>
        <taxon>Eukaryota</taxon>
        <taxon>Metazoa</taxon>
        <taxon>Chordata</taxon>
        <taxon>Craniata</taxon>
        <taxon>Vertebrata</taxon>
        <taxon>Euteleostomi</taxon>
        <taxon>Mammalia</taxon>
        <taxon>Eutheria</taxon>
        <taxon>Euarchontoglires</taxon>
        <taxon>Glires</taxon>
        <taxon>Rodentia</taxon>
        <taxon>Myomorpha</taxon>
        <taxon>Muroidea</taxon>
        <taxon>Muridae</taxon>
        <taxon>Murinae</taxon>
        <taxon>Mus</taxon>
        <taxon>Mus</taxon>
    </lineage>
</organism>
<sequence>MHQIYSCSDENIEVFTTVIPSKVSSSSRRRVKSSHHLLAKNVVIESDLYPPPRPLELLPQRCERRDTGDRRWLQTGRLQTARPPGAHPTKTPSRPVGISEPKTSNLCGNRAYGKSLIPPVARISVKAPAGAEVAAKGSEHGAVLGRGSRHLKKIAEEYPALPQGAEASLPLTGSTSCGVPGILRKMWTRHKKKSEYVGATNSAFEAD</sequence>
<comment type="function">
    <text evidence="2">Required for neurogenesis in the neural plate and retina. Strongly cooperates with neural bHLH factors to promote neurogenesis (PubMed:29518376).</text>
</comment>
<comment type="subcellular location">
    <subcellularLocation>
        <location evidence="2">Cell membrane</location>
    </subcellularLocation>
    <subcellularLocation>
        <location evidence="2">Nucleus</location>
    </subcellularLocation>
    <text evidence="2">Nuclear localization is essential for its function in neurogenesis.</text>
</comment>
<comment type="similarity">
    <text evidence="4">Belongs to the vexin family.</text>
</comment>